<protein>
    <recommendedName>
        <fullName>Probable prefoldin subunit 5</fullName>
    </recommendedName>
</protein>
<evidence type="ECO:0000250" key="1"/>
<evidence type="ECO:0000305" key="2"/>
<proteinExistence type="inferred from homology"/>
<dbReference type="EMBL" id="AAFI02000037">
    <property type="protein sequence ID" value="EAL67105.1"/>
    <property type="molecule type" value="Genomic_DNA"/>
</dbReference>
<dbReference type="RefSeq" id="XP_641076.1">
    <property type="nucleotide sequence ID" value="XM_635984.1"/>
</dbReference>
<dbReference type="SMR" id="Q54V55"/>
<dbReference type="FunCoup" id="Q54V55">
    <property type="interactions" value="817"/>
</dbReference>
<dbReference type="STRING" id="44689.Q54V55"/>
<dbReference type="PaxDb" id="44689-DDB0237720"/>
<dbReference type="EnsemblProtists" id="EAL67105">
    <property type="protein sequence ID" value="EAL67105"/>
    <property type="gene ID" value="DDB_G0280607"/>
</dbReference>
<dbReference type="GeneID" id="8622635"/>
<dbReference type="KEGG" id="ddi:DDB_G0280607"/>
<dbReference type="dictyBase" id="DDB_G0280607">
    <property type="gene designation" value="pfdn5"/>
</dbReference>
<dbReference type="VEuPathDB" id="AmoebaDB:DDB_G0280607"/>
<dbReference type="eggNOG" id="KOG3048">
    <property type="taxonomic scope" value="Eukaryota"/>
</dbReference>
<dbReference type="HOGENOM" id="CLU_091867_0_2_1"/>
<dbReference type="InParanoid" id="Q54V55"/>
<dbReference type="OMA" id="QAKFKAC"/>
<dbReference type="PhylomeDB" id="Q54V55"/>
<dbReference type="PRO" id="PR:Q54V55"/>
<dbReference type="Proteomes" id="UP000002195">
    <property type="component" value="Chromosome 3"/>
</dbReference>
<dbReference type="GO" id="GO:0005737">
    <property type="term" value="C:cytoplasm"/>
    <property type="evidence" value="ECO:0000318"/>
    <property type="project" value="GO_Central"/>
</dbReference>
<dbReference type="GO" id="GO:0016272">
    <property type="term" value="C:prefoldin complex"/>
    <property type="evidence" value="ECO:0000318"/>
    <property type="project" value="GO_Central"/>
</dbReference>
<dbReference type="GO" id="GO:0051082">
    <property type="term" value="F:unfolded protein binding"/>
    <property type="evidence" value="ECO:0007669"/>
    <property type="project" value="InterPro"/>
</dbReference>
<dbReference type="GO" id="GO:0006457">
    <property type="term" value="P:protein folding"/>
    <property type="evidence" value="ECO:0007669"/>
    <property type="project" value="InterPro"/>
</dbReference>
<dbReference type="GO" id="GO:1990113">
    <property type="term" value="P:RNA polymerase I assembly"/>
    <property type="evidence" value="ECO:0000318"/>
    <property type="project" value="GO_Central"/>
</dbReference>
<dbReference type="GO" id="GO:1990114">
    <property type="term" value="P:RNA polymerase II core complex assembly"/>
    <property type="evidence" value="ECO:0000318"/>
    <property type="project" value="GO_Central"/>
</dbReference>
<dbReference type="GO" id="GO:1990115">
    <property type="term" value="P:RNA polymerase III assembly"/>
    <property type="evidence" value="ECO:0000318"/>
    <property type="project" value="GO_Central"/>
</dbReference>
<dbReference type="CDD" id="cd23157">
    <property type="entry name" value="Prefoldin_5"/>
    <property type="match status" value="1"/>
</dbReference>
<dbReference type="FunFam" id="1.10.287.370:FF:000004">
    <property type="entry name" value="Probable prefoldin subunit 5"/>
    <property type="match status" value="1"/>
</dbReference>
<dbReference type="Gene3D" id="1.10.287.370">
    <property type="match status" value="1"/>
</dbReference>
<dbReference type="InterPro" id="IPR011599">
    <property type="entry name" value="PFD_alpha_archaea"/>
</dbReference>
<dbReference type="InterPro" id="IPR009053">
    <property type="entry name" value="Prefoldin"/>
</dbReference>
<dbReference type="InterPro" id="IPR004127">
    <property type="entry name" value="Prefoldin_subunit_alpha"/>
</dbReference>
<dbReference type="NCBIfam" id="TIGR00293">
    <property type="entry name" value="prefoldin subunit alpha"/>
    <property type="match status" value="1"/>
</dbReference>
<dbReference type="PANTHER" id="PTHR12674">
    <property type="entry name" value="PREFOLDIN SUBUNIT 5"/>
    <property type="match status" value="1"/>
</dbReference>
<dbReference type="PANTHER" id="PTHR12674:SF2">
    <property type="entry name" value="PREFOLDIN SUBUNIT 5"/>
    <property type="match status" value="1"/>
</dbReference>
<dbReference type="Pfam" id="PF02996">
    <property type="entry name" value="Prefoldin"/>
    <property type="match status" value="1"/>
</dbReference>
<dbReference type="SUPFAM" id="SSF46579">
    <property type="entry name" value="Prefoldin"/>
    <property type="match status" value="1"/>
</dbReference>
<comment type="function">
    <text evidence="1">Binds specifically to cytosolic chaperonin (c-CPN) and transfers target proteins to it. Binds to nascent polypeptide chain and promotes folding in an environment in which there are many competing pathways for nonnative proteins (By similarity).</text>
</comment>
<comment type="subunit">
    <text evidence="1">Heterohexamer of two PFD-alpha type and four PFD-beta type subunits.</text>
</comment>
<comment type="similarity">
    <text evidence="2">Belongs to the prefoldin subunit alpha family.</text>
</comment>
<reference key="1">
    <citation type="journal article" date="2005" name="Nature">
        <title>The genome of the social amoeba Dictyostelium discoideum.</title>
        <authorList>
            <person name="Eichinger L."/>
            <person name="Pachebat J.A."/>
            <person name="Gloeckner G."/>
            <person name="Rajandream M.A."/>
            <person name="Sucgang R."/>
            <person name="Berriman M."/>
            <person name="Song J."/>
            <person name="Olsen R."/>
            <person name="Szafranski K."/>
            <person name="Xu Q."/>
            <person name="Tunggal B."/>
            <person name="Kummerfeld S."/>
            <person name="Madera M."/>
            <person name="Konfortov B.A."/>
            <person name="Rivero F."/>
            <person name="Bankier A.T."/>
            <person name="Lehmann R."/>
            <person name="Hamlin N."/>
            <person name="Davies R."/>
            <person name="Gaudet P."/>
            <person name="Fey P."/>
            <person name="Pilcher K."/>
            <person name="Chen G."/>
            <person name="Saunders D."/>
            <person name="Sodergren E.J."/>
            <person name="Davis P."/>
            <person name="Kerhornou A."/>
            <person name="Nie X."/>
            <person name="Hall N."/>
            <person name="Anjard C."/>
            <person name="Hemphill L."/>
            <person name="Bason N."/>
            <person name="Farbrother P."/>
            <person name="Desany B."/>
            <person name="Just E."/>
            <person name="Morio T."/>
            <person name="Rost R."/>
            <person name="Churcher C.M."/>
            <person name="Cooper J."/>
            <person name="Haydock S."/>
            <person name="van Driessche N."/>
            <person name="Cronin A."/>
            <person name="Goodhead I."/>
            <person name="Muzny D.M."/>
            <person name="Mourier T."/>
            <person name="Pain A."/>
            <person name="Lu M."/>
            <person name="Harper D."/>
            <person name="Lindsay R."/>
            <person name="Hauser H."/>
            <person name="James K.D."/>
            <person name="Quiles M."/>
            <person name="Madan Babu M."/>
            <person name="Saito T."/>
            <person name="Buchrieser C."/>
            <person name="Wardroper A."/>
            <person name="Felder M."/>
            <person name="Thangavelu M."/>
            <person name="Johnson D."/>
            <person name="Knights A."/>
            <person name="Loulseged H."/>
            <person name="Mungall K.L."/>
            <person name="Oliver K."/>
            <person name="Price C."/>
            <person name="Quail M.A."/>
            <person name="Urushihara H."/>
            <person name="Hernandez J."/>
            <person name="Rabbinowitsch E."/>
            <person name="Steffen D."/>
            <person name="Sanders M."/>
            <person name="Ma J."/>
            <person name="Kohara Y."/>
            <person name="Sharp S."/>
            <person name="Simmonds M.N."/>
            <person name="Spiegler S."/>
            <person name="Tivey A."/>
            <person name="Sugano S."/>
            <person name="White B."/>
            <person name="Walker D."/>
            <person name="Woodward J.R."/>
            <person name="Winckler T."/>
            <person name="Tanaka Y."/>
            <person name="Shaulsky G."/>
            <person name="Schleicher M."/>
            <person name="Weinstock G.M."/>
            <person name="Rosenthal A."/>
            <person name="Cox E.C."/>
            <person name="Chisholm R.L."/>
            <person name="Gibbs R.A."/>
            <person name="Loomis W.F."/>
            <person name="Platzer M."/>
            <person name="Kay R.R."/>
            <person name="Williams J.G."/>
            <person name="Dear P.H."/>
            <person name="Noegel A.A."/>
            <person name="Barrell B.G."/>
            <person name="Kuspa A."/>
        </authorList>
    </citation>
    <scope>NUCLEOTIDE SEQUENCE [LARGE SCALE GENOMIC DNA]</scope>
    <source>
        <strain>AX4</strain>
    </source>
</reference>
<feature type="chain" id="PRO_0000328332" description="Probable prefoldin subunit 5">
    <location>
        <begin position="1"/>
        <end position="160"/>
    </location>
</feature>
<sequence>MSEPQQQQVNLGSLSLEQLQMVREQVEAEIQQLSESIQQLKHASNKYIEAKEAMGGLKGTDGKDMLVPLTSSIYLPGKINSNEKVLVDIGTGYYVEMGIEQGQNFSNRKVQLITEQVNKVQTAINMKRQNLESIVQVAQSKISLYKQQQAQQSQQQVQQK</sequence>
<name>PFD5_DICDI</name>
<gene>
    <name type="primary">pfdn5</name>
    <name type="ORF">DDB_G0280607</name>
</gene>
<keyword id="KW-0143">Chaperone</keyword>
<keyword id="KW-1185">Reference proteome</keyword>
<organism>
    <name type="scientific">Dictyostelium discoideum</name>
    <name type="common">Social amoeba</name>
    <dbReference type="NCBI Taxonomy" id="44689"/>
    <lineage>
        <taxon>Eukaryota</taxon>
        <taxon>Amoebozoa</taxon>
        <taxon>Evosea</taxon>
        <taxon>Eumycetozoa</taxon>
        <taxon>Dictyostelia</taxon>
        <taxon>Dictyosteliales</taxon>
        <taxon>Dictyosteliaceae</taxon>
        <taxon>Dictyostelium</taxon>
    </lineage>
</organism>
<accession>Q54V55</accession>